<sequence length="590" mass="65869">MRTEYCGQLRLSHVGQQVTLCGWVNRRRDLGSLIFIDMRDREGIVQVFFDPDRADALKLASELRNEFCIQVTGTVRARDEKNINRDMATGEIEVLASSLTIINRADVLPLDSNHVNTEEARLKYRYLDLRRPEMAQRLKTRAKITSLVRRFMDDHGFLDIETPMLTKATPEGARDYLVPSRVHKGKFYALPQSPQLFKQLLMMSGFDRYYQIVKCFRDEDLRADRQPEFTQIDVETSFMTAPQVREVMEALVRHLWLEVKGVDLGDFPVMTFAEAERRYGSDKPDLRNPMELTDVADLLKSVEFAVFAGPANDPKGRVAALRVPGGASLTRKQIDEYGNFVKIYGAKGLAYIKVNERAKGLEGINSPVAKFLNAEIIEAILDRTAAQDGDMIFFGADNKKIVADAMGALRLKVGKDLGLTDESKWAPLWVIDFPMFEDDGEGGLTAMHHPFTSPKDMTAAELKAAPENAVANAYDMVINGYEVGGGSVRIHNGDMQQTVFGILGINEEEQREKFGFLLDALKYGTPPHAGLAFGLDRLTMLLTGTDNIRDVIAFPKTTAAACLMTEAPSFANPTALAELSIQVVKKAENN</sequence>
<gene>
    <name evidence="1" type="primary">aspS</name>
    <name type="ordered locus">ECSE_2042</name>
</gene>
<comment type="function">
    <text evidence="1">Catalyzes the attachment of L-aspartate to tRNA(Asp) in a two-step reaction: L-aspartate is first activated by ATP to form Asp-AMP and then transferred to the acceptor end of tRNA(Asp).</text>
</comment>
<comment type="catalytic activity">
    <reaction evidence="1">
        <text>tRNA(Asp) + L-aspartate + ATP = L-aspartyl-tRNA(Asp) + AMP + diphosphate</text>
        <dbReference type="Rhea" id="RHEA:19649"/>
        <dbReference type="Rhea" id="RHEA-COMP:9660"/>
        <dbReference type="Rhea" id="RHEA-COMP:9678"/>
        <dbReference type="ChEBI" id="CHEBI:29991"/>
        <dbReference type="ChEBI" id="CHEBI:30616"/>
        <dbReference type="ChEBI" id="CHEBI:33019"/>
        <dbReference type="ChEBI" id="CHEBI:78442"/>
        <dbReference type="ChEBI" id="CHEBI:78516"/>
        <dbReference type="ChEBI" id="CHEBI:456215"/>
        <dbReference type="EC" id="6.1.1.12"/>
    </reaction>
</comment>
<comment type="subunit">
    <text evidence="1">Homodimer.</text>
</comment>
<comment type="subcellular location">
    <subcellularLocation>
        <location evidence="1">Cytoplasm</location>
    </subcellularLocation>
</comment>
<comment type="similarity">
    <text evidence="1">Belongs to the class-II aminoacyl-tRNA synthetase family. Type 1 subfamily.</text>
</comment>
<keyword id="KW-0030">Aminoacyl-tRNA synthetase</keyword>
<keyword id="KW-0067">ATP-binding</keyword>
<keyword id="KW-0963">Cytoplasm</keyword>
<keyword id="KW-0436">Ligase</keyword>
<keyword id="KW-0547">Nucleotide-binding</keyword>
<keyword id="KW-0648">Protein biosynthesis</keyword>
<proteinExistence type="inferred from homology"/>
<feature type="chain" id="PRO_1000090992" description="Aspartate--tRNA ligase">
    <location>
        <begin position="1"/>
        <end position="590"/>
    </location>
</feature>
<feature type="region of interest" description="Aspartate" evidence="1">
    <location>
        <begin position="195"/>
        <end position="198"/>
    </location>
</feature>
<feature type="binding site" evidence="1">
    <location>
        <position position="171"/>
    </location>
    <ligand>
        <name>L-aspartate</name>
        <dbReference type="ChEBI" id="CHEBI:29991"/>
    </ligand>
</feature>
<feature type="binding site" evidence="1">
    <location>
        <begin position="217"/>
        <end position="219"/>
    </location>
    <ligand>
        <name>ATP</name>
        <dbReference type="ChEBI" id="CHEBI:30616"/>
    </ligand>
</feature>
<feature type="binding site" evidence="1">
    <location>
        <position position="217"/>
    </location>
    <ligand>
        <name>L-aspartate</name>
        <dbReference type="ChEBI" id="CHEBI:29991"/>
    </ligand>
</feature>
<feature type="binding site" evidence="1">
    <location>
        <position position="226"/>
    </location>
    <ligand>
        <name>ATP</name>
        <dbReference type="ChEBI" id="CHEBI:30616"/>
    </ligand>
</feature>
<feature type="binding site" evidence="1">
    <location>
        <position position="448"/>
    </location>
    <ligand>
        <name>L-aspartate</name>
        <dbReference type="ChEBI" id="CHEBI:29991"/>
    </ligand>
</feature>
<feature type="binding site" evidence="1">
    <location>
        <position position="482"/>
    </location>
    <ligand>
        <name>ATP</name>
        <dbReference type="ChEBI" id="CHEBI:30616"/>
    </ligand>
</feature>
<feature type="binding site" evidence="1">
    <location>
        <position position="489"/>
    </location>
    <ligand>
        <name>L-aspartate</name>
        <dbReference type="ChEBI" id="CHEBI:29991"/>
    </ligand>
</feature>
<feature type="binding site" evidence="1">
    <location>
        <begin position="534"/>
        <end position="537"/>
    </location>
    <ligand>
        <name>ATP</name>
        <dbReference type="ChEBI" id="CHEBI:30616"/>
    </ligand>
</feature>
<name>SYD_ECOSE</name>
<dbReference type="EC" id="6.1.1.12" evidence="1"/>
<dbReference type="EMBL" id="AP009240">
    <property type="protein sequence ID" value="BAG77566.1"/>
    <property type="molecule type" value="Genomic_DNA"/>
</dbReference>
<dbReference type="RefSeq" id="WP_001258662.1">
    <property type="nucleotide sequence ID" value="NC_011415.1"/>
</dbReference>
<dbReference type="SMR" id="B6IBU5"/>
<dbReference type="GeneID" id="75202728"/>
<dbReference type="KEGG" id="ecy:ECSE_2042"/>
<dbReference type="HOGENOM" id="CLU_014330_3_2_6"/>
<dbReference type="Proteomes" id="UP000008199">
    <property type="component" value="Chromosome"/>
</dbReference>
<dbReference type="GO" id="GO:0005737">
    <property type="term" value="C:cytoplasm"/>
    <property type="evidence" value="ECO:0007669"/>
    <property type="project" value="UniProtKB-SubCell"/>
</dbReference>
<dbReference type="GO" id="GO:0004815">
    <property type="term" value="F:aspartate-tRNA ligase activity"/>
    <property type="evidence" value="ECO:0007669"/>
    <property type="project" value="UniProtKB-UniRule"/>
</dbReference>
<dbReference type="GO" id="GO:0005524">
    <property type="term" value="F:ATP binding"/>
    <property type="evidence" value="ECO:0007669"/>
    <property type="project" value="UniProtKB-UniRule"/>
</dbReference>
<dbReference type="GO" id="GO:0003676">
    <property type="term" value="F:nucleic acid binding"/>
    <property type="evidence" value="ECO:0007669"/>
    <property type="project" value="InterPro"/>
</dbReference>
<dbReference type="GO" id="GO:0006422">
    <property type="term" value="P:aspartyl-tRNA aminoacylation"/>
    <property type="evidence" value="ECO:0007669"/>
    <property type="project" value="UniProtKB-UniRule"/>
</dbReference>
<dbReference type="CDD" id="cd00777">
    <property type="entry name" value="AspRS_core"/>
    <property type="match status" value="1"/>
</dbReference>
<dbReference type="CDD" id="cd04317">
    <property type="entry name" value="EcAspRS_like_N"/>
    <property type="match status" value="1"/>
</dbReference>
<dbReference type="FunFam" id="2.40.50.140:FF:000080">
    <property type="entry name" value="Aspartate--tRNA ligase"/>
    <property type="match status" value="1"/>
</dbReference>
<dbReference type="FunFam" id="3.30.1360.30:FF:000001">
    <property type="entry name" value="Aspartate--tRNA ligase"/>
    <property type="match status" value="1"/>
</dbReference>
<dbReference type="Gene3D" id="3.30.930.10">
    <property type="entry name" value="Bira Bifunctional Protein, Domain 2"/>
    <property type="match status" value="1"/>
</dbReference>
<dbReference type="Gene3D" id="3.30.1360.30">
    <property type="entry name" value="GAD-like domain"/>
    <property type="match status" value="1"/>
</dbReference>
<dbReference type="Gene3D" id="2.40.50.140">
    <property type="entry name" value="Nucleic acid-binding proteins"/>
    <property type="match status" value="1"/>
</dbReference>
<dbReference type="HAMAP" id="MF_00044">
    <property type="entry name" value="Asp_tRNA_synth_type1"/>
    <property type="match status" value="1"/>
</dbReference>
<dbReference type="InterPro" id="IPR004364">
    <property type="entry name" value="Aa-tRNA-synt_II"/>
</dbReference>
<dbReference type="InterPro" id="IPR006195">
    <property type="entry name" value="aa-tRNA-synth_II"/>
</dbReference>
<dbReference type="InterPro" id="IPR045864">
    <property type="entry name" value="aa-tRNA-synth_II/BPL/LPL"/>
</dbReference>
<dbReference type="InterPro" id="IPR004524">
    <property type="entry name" value="Asp-tRNA-ligase_1"/>
</dbReference>
<dbReference type="InterPro" id="IPR047089">
    <property type="entry name" value="Asp-tRNA-ligase_1_N"/>
</dbReference>
<dbReference type="InterPro" id="IPR002312">
    <property type="entry name" value="Asp/Asn-tRNA-synth_IIb"/>
</dbReference>
<dbReference type="InterPro" id="IPR047090">
    <property type="entry name" value="AspRS_core"/>
</dbReference>
<dbReference type="InterPro" id="IPR004115">
    <property type="entry name" value="GAD-like_sf"/>
</dbReference>
<dbReference type="InterPro" id="IPR029351">
    <property type="entry name" value="GAD_dom"/>
</dbReference>
<dbReference type="InterPro" id="IPR012340">
    <property type="entry name" value="NA-bd_OB-fold"/>
</dbReference>
<dbReference type="InterPro" id="IPR004365">
    <property type="entry name" value="NA-bd_OB_tRNA"/>
</dbReference>
<dbReference type="NCBIfam" id="TIGR00459">
    <property type="entry name" value="aspS_bact"/>
    <property type="match status" value="1"/>
</dbReference>
<dbReference type="NCBIfam" id="NF001750">
    <property type="entry name" value="PRK00476.1"/>
    <property type="match status" value="1"/>
</dbReference>
<dbReference type="PANTHER" id="PTHR22594:SF5">
    <property type="entry name" value="ASPARTATE--TRNA LIGASE, MITOCHONDRIAL"/>
    <property type="match status" value="1"/>
</dbReference>
<dbReference type="PANTHER" id="PTHR22594">
    <property type="entry name" value="ASPARTYL/LYSYL-TRNA SYNTHETASE"/>
    <property type="match status" value="1"/>
</dbReference>
<dbReference type="Pfam" id="PF02938">
    <property type="entry name" value="GAD"/>
    <property type="match status" value="1"/>
</dbReference>
<dbReference type="Pfam" id="PF00152">
    <property type="entry name" value="tRNA-synt_2"/>
    <property type="match status" value="1"/>
</dbReference>
<dbReference type="Pfam" id="PF01336">
    <property type="entry name" value="tRNA_anti-codon"/>
    <property type="match status" value="1"/>
</dbReference>
<dbReference type="PRINTS" id="PR01042">
    <property type="entry name" value="TRNASYNTHASP"/>
</dbReference>
<dbReference type="SUPFAM" id="SSF55681">
    <property type="entry name" value="Class II aaRS and biotin synthetases"/>
    <property type="match status" value="1"/>
</dbReference>
<dbReference type="SUPFAM" id="SSF55261">
    <property type="entry name" value="GAD domain-like"/>
    <property type="match status" value="1"/>
</dbReference>
<dbReference type="SUPFAM" id="SSF50249">
    <property type="entry name" value="Nucleic acid-binding proteins"/>
    <property type="match status" value="1"/>
</dbReference>
<dbReference type="PROSITE" id="PS50862">
    <property type="entry name" value="AA_TRNA_LIGASE_II"/>
    <property type="match status" value="1"/>
</dbReference>
<organism>
    <name type="scientific">Escherichia coli (strain SE11)</name>
    <dbReference type="NCBI Taxonomy" id="409438"/>
    <lineage>
        <taxon>Bacteria</taxon>
        <taxon>Pseudomonadati</taxon>
        <taxon>Pseudomonadota</taxon>
        <taxon>Gammaproteobacteria</taxon>
        <taxon>Enterobacterales</taxon>
        <taxon>Enterobacteriaceae</taxon>
        <taxon>Escherichia</taxon>
    </lineage>
</organism>
<reference key="1">
    <citation type="journal article" date="2008" name="DNA Res.">
        <title>Complete genome sequence and comparative analysis of the wild-type commensal Escherichia coli strain SE11 isolated from a healthy adult.</title>
        <authorList>
            <person name="Oshima K."/>
            <person name="Toh H."/>
            <person name="Ogura Y."/>
            <person name="Sasamoto H."/>
            <person name="Morita H."/>
            <person name="Park S.-H."/>
            <person name="Ooka T."/>
            <person name="Iyoda S."/>
            <person name="Taylor T.D."/>
            <person name="Hayashi T."/>
            <person name="Itoh K."/>
            <person name="Hattori M."/>
        </authorList>
    </citation>
    <scope>NUCLEOTIDE SEQUENCE [LARGE SCALE GENOMIC DNA]</scope>
    <source>
        <strain>SE11</strain>
    </source>
</reference>
<evidence type="ECO:0000255" key="1">
    <source>
        <dbReference type="HAMAP-Rule" id="MF_00044"/>
    </source>
</evidence>
<protein>
    <recommendedName>
        <fullName evidence="1">Aspartate--tRNA ligase</fullName>
        <ecNumber evidence="1">6.1.1.12</ecNumber>
    </recommendedName>
    <alternativeName>
        <fullName evidence="1">Aspartyl-tRNA synthetase</fullName>
        <shortName evidence="1">AspRS</shortName>
    </alternativeName>
</protein>
<accession>B6IBU5</accession>